<name>MELK_XENTR</name>
<evidence type="ECO:0000250" key="1"/>
<evidence type="ECO:0000255" key="2">
    <source>
        <dbReference type="PROSITE-ProRule" id="PRU00159"/>
    </source>
</evidence>
<evidence type="ECO:0000255" key="3">
    <source>
        <dbReference type="PROSITE-ProRule" id="PRU00565"/>
    </source>
</evidence>
<evidence type="ECO:0000255" key="4">
    <source>
        <dbReference type="PROSITE-ProRule" id="PRU10027"/>
    </source>
</evidence>
<evidence type="ECO:0000256" key="5">
    <source>
        <dbReference type="SAM" id="MobiDB-lite"/>
    </source>
</evidence>
<evidence type="ECO:0000305" key="6"/>
<sequence length="652" mass="74276">MAVDDYEELLKYYELHETIGTGGFAKVKLASHLTTGEKVAIKIMDKESLGDDLPRVKTEIDAMKNLSHQHVCRLYHVIETPNKIFMVLEYCPGGELFDYIIAKDRLTEDEARVFFRQIVSAVAYIHSQGYAHRDLKPENLLIDEDQNLKLIDFGLCAKPKGGLDYHLMTCCGSPAYAAPELIQGKAYIGSEADIWSMGVLMYALMCGYLPFDDDNVMVLYKKIMRGKYEIPKWLSPGSVLLLSQMLQVDPKKRISVKHLLSHPWLMQGYSCPVEWQSKYPLGYVDEDCVTELSVFYKCSRTSTSRLISEWNYDHITASYLLLHSKKSHGKPVRLKRPLAVGDQPVTSFKELRPKSTLDFEEPNCGEIAYVFGSMEFSDDELFSEDFAYSCFEPHTPKEYVKGRSEFHSVDSAPSTPVVQRYARHKSEDKENCDAALGKDENVFLHPAPWTPTPRRKQNEKKGILTTPNKNSHTKEKNQSKETPTKKPITTGEELANVISPERRCRSVELDLNQAHVDSAQKKKGAKVFGSLERGLDKMITMLTPSKRKGYAREGPRKLRAHYNVTTTNIMNPEQLLNQIVKVLPSKNVDYVQKGYTLKCKTQSDFGKVTMQFELEVCQLSKSEMVGIRRQRLKGDAWVYKRLVEDILSSCKV</sequence>
<gene>
    <name type="primary">melk</name>
    <name type="ORF">TEgg058f04.1</name>
</gene>
<reference key="1">
    <citation type="submission" date="2006-10" db="EMBL/GenBank/DDBJ databases">
        <authorList>
            <consortium name="Sanger Xenopus tropicalis EST/cDNA project"/>
        </authorList>
    </citation>
    <scope>NUCLEOTIDE SEQUENCE [LARGE SCALE MRNA]</scope>
    <source>
        <tissue>Egg</tissue>
    </source>
</reference>
<reference key="2">
    <citation type="journal article" date="2010" name="Science">
        <title>The genome of the Western clawed frog Xenopus tropicalis.</title>
        <authorList>
            <person name="Hellsten U."/>
            <person name="Harland R.M."/>
            <person name="Gilchrist M.J."/>
            <person name="Hendrix D."/>
            <person name="Jurka J."/>
            <person name="Kapitonov V."/>
            <person name="Ovcharenko I."/>
            <person name="Putnam N.H."/>
            <person name="Shu S."/>
            <person name="Taher L."/>
            <person name="Blitz I.L."/>
            <person name="Blumberg B."/>
            <person name="Dichmann D.S."/>
            <person name="Dubchak I."/>
            <person name="Amaya E."/>
            <person name="Detter J.C."/>
            <person name="Fletcher R."/>
            <person name="Gerhard D.S."/>
            <person name="Goodstein D."/>
            <person name="Graves T."/>
            <person name="Grigoriev I.V."/>
            <person name="Grimwood J."/>
            <person name="Kawashima T."/>
            <person name="Lindquist E."/>
            <person name="Lucas S.M."/>
            <person name="Mead P.E."/>
            <person name="Mitros T."/>
            <person name="Ogino H."/>
            <person name="Ohta Y."/>
            <person name="Poliakov A.V."/>
            <person name="Pollet N."/>
            <person name="Robert J."/>
            <person name="Salamov A."/>
            <person name="Sater A.K."/>
            <person name="Schmutz J."/>
            <person name="Terry A."/>
            <person name="Vize P.D."/>
            <person name="Warren W.C."/>
            <person name="Wells D."/>
            <person name="Wills A."/>
            <person name="Wilson R.K."/>
            <person name="Zimmerman L.B."/>
            <person name="Zorn A.M."/>
            <person name="Grainger R."/>
            <person name="Grammer T."/>
            <person name="Khokha M.K."/>
            <person name="Richardson P.M."/>
            <person name="Rokhsar D.S."/>
        </authorList>
    </citation>
    <scope>NUCLEOTIDE SEQUENCE [LARGE SCALE GENOMIC DNA]</scope>
</reference>
<reference key="3">
    <citation type="submission" date="2007-03" db="EMBL/GenBank/DDBJ databases">
        <authorList>
            <consortium name="NIH - Xenopus Gene Collection (XGC) project"/>
        </authorList>
    </citation>
    <scope>NUCLEOTIDE SEQUENCE [LARGE SCALE MRNA]</scope>
    <source>
        <tissue>Embryo</tissue>
    </source>
</reference>
<comment type="function">
    <text evidence="1">Serine/threonine-protein kinase involved in various processes such as cell cycle regulation, self-renewal of stem cells, apoptosis and splicing regulation. Also plays a role in primitive hematopoiesis, possibly by affecting the expression of genes critical for hematopoiesis. Plays a role in cytokinesis during early development (By similarity).</text>
</comment>
<comment type="catalytic activity">
    <reaction>
        <text>L-seryl-[protein] + ATP = O-phospho-L-seryl-[protein] + ADP + H(+)</text>
        <dbReference type="Rhea" id="RHEA:17989"/>
        <dbReference type="Rhea" id="RHEA-COMP:9863"/>
        <dbReference type="Rhea" id="RHEA-COMP:11604"/>
        <dbReference type="ChEBI" id="CHEBI:15378"/>
        <dbReference type="ChEBI" id="CHEBI:29999"/>
        <dbReference type="ChEBI" id="CHEBI:30616"/>
        <dbReference type="ChEBI" id="CHEBI:83421"/>
        <dbReference type="ChEBI" id="CHEBI:456216"/>
        <dbReference type="EC" id="2.7.11.1"/>
    </reaction>
</comment>
<comment type="catalytic activity">
    <reaction>
        <text>L-threonyl-[protein] + ATP = O-phospho-L-threonyl-[protein] + ADP + H(+)</text>
        <dbReference type="Rhea" id="RHEA:46608"/>
        <dbReference type="Rhea" id="RHEA-COMP:11060"/>
        <dbReference type="Rhea" id="RHEA-COMP:11605"/>
        <dbReference type="ChEBI" id="CHEBI:15378"/>
        <dbReference type="ChEBI" id="CHEBI:30013"/>
        <dbReference type="ChEBI" id="CHEBI:30616"/>
        <dbReference type="ChEBI" id="CHEBI:61977"/>
        <dbReference type="ChEBI" id="CHEBI:456216"/>
        <dbReference type="EC" id="2.7.11.1"/>
    </reaction>
</comment>
<comment type="activity regulation">
    <text evidence="1">Activated by autophosphorylation of the T-loop at Thr-169 and Ser-173: in contrast to other members of the SNF1 subfamily, phosphorylation at Thr-169 is not mediated by STK11/LKB1 but via autophosphorylation instead.</text>
</comment>
<comment type="subcellular location">
    <subcellularLocation>
        <location evidence="1">Cell membrane</location>
        <topology evidence="1">Peripheral membrane protein</topology>
    </subcellularLocation>
</comment>
<comment type="domain">
    <text evidence="1">The KA1 domain mediates binding to phospholipids and targeting to membranes.</text>
</comment>
<comment type="PTM">
    <text evidence="1">Autophosphorylated: autophosphorylation of the T-loop at Thr-169 and Ser-173 is required for activation. Phosphorylated by the maturation promoting factor (MPF), composed of cdk1 and a cyclin-B. Also phosphorylated by some MAPK. Phosphorylated during oocyte maturation. Dephosphorylation destabilizes the protein (By similarity).</text>
</comment>
<comment type="PTM">
    <text evidence="1">Degraded when cells exit mitosis.</text>
</comment>
<comment type="similarity">
    <text evidence="6">Belongs to the protein kinase superfamily. CAMK Ser/Thr protein kinase family. SNF1 subfamily.</text>
</comment>
<comment type="sequence caution" evidence="6">
    <conflict type="erroneous termination">
        <sequence resource="EMBL-CDS" id="AAI35246"/>
    </conflict>
    <text>Truncated C-terminus.</text>
</comment>
<proteinExistence type="evidence at transcript level"/>
<feature type="chain" id="PRO_0000413431" description="Maternal embryonic leucine zipper kinase">
    <location>
        <begin position="1"/>
        <end position="652"/>
    </location>
</feature>
<feature type="domain" description="Protein kinase" evidence="2">
    <location>
        <begin position="13"/>
        <end position="265"/>
    </location>
</feature>
<feature type="domain" description="KA1" evidence="3">
    <location>
        <begin position="603"/>
        <end position="652"/>
    </location>
</feature>
<feature type="region of interest" description="UBA-like" evidence="1">
    <location>
        <begin position="284"/>
        <end position="323"/>
    </location>
</feature>
<feature type="region of interest" description="Autoinhibitory region" evidence="1">
    <location>
        <begin position="328"/>
        <end position="652"/>
    </location>
</feature>
<feature type="region of interest" description="Disordered" evidence="5">
    <location>
        <begin position="443"/>
        <end position="492"/>
    </location>
</feature>
<feature type="compositionally biased region" description="Basic and acidic residues" evidence="5">
    <location>
        <begin position="472"/>
        <end position="484"/>
    </location>
</feature>
<feature type="active site" description="Proton acceptor" evidence="2 4">
    <location>
        <position position="134"/>
    </location>
</feature>
<feature type="binding site" evidence="2">
    <location>
        <begin position="19"/>
        <end position="27"/>
    </location>
    <ligand>
        <name>ATP</name>
        <dbReference type="ChEBI" id="CHEBI:30616"/>
    </ligand>
</feature>
<feature type="binding site" evidence="2">
    <location>
        <position position="42"/>
    </location>
    <ligand>
        <name>ATP</name>
        <dbReference type="ChEBI" id="CHEBI:30616"/>
    </ligand>
</feature>
<feature type="modified residue" description="Phosphothreonine; by autocatalysis" evidence="1">
    <location>
        <position position="169"/>
    </location>
</feature>
<feature type="modified residue" description="Phosphoserine; by autocatalysis" evidence="1">
    <location>
        <position position="173"/>
    </location>
</feature>
<feature type="modified residue" description="Phosphothreonine" evidence="1">
    <location>
        <position position="415"/>
    </location>
</feature>
<feature type="modified residue" description="Phosphothreonine" evidence="1">
    <location>
        <position position="450"/>
    </location>
</feature>
<feature type="modified residue" description="Phosphothreonine" evidence="1">
    <location>
        <position position="452"/>
    </location>
</feature>
<feature type="modified residue" description="Phosphothreonine" evidence="1">
    <location>
        <position position="482"/>
    </location>
</feature>
<feature type="modified residue" description="Phosphothreonine" evidence="1">
    <location>
        <position position="484"/>
    </location>
</feature>
<feature type="modified residue" description="Phosphoserine" evidence="1">
    <location>
        <position position="499"/>
    </location>
</feature>
<feature type="modified residue" description="Phosphoserine" evidence="1">
    <location>
        <position position="506"/>
    </location>
</feature>
<feature type="modified residue" description="Phosphoserine" evidence="1">
    <location>
        <position position="518"/>
    </location>
</feature>
<keyword id="KW-0053">Apoptosis</keyword>
<keyword id="KW-0067">ATP-binding</keyword>
<keyword id="KW-0131">Cell cycle</keyword>
<keyword id="KW-1003">Cell membrane</keyword>
<keyword id="KW-0418">Kinase</keyword>
<keyword id="KW-0446">Lipid-binding</keyword>
<keyword id="KW-0472">Membrane</keyword>
<keyword id="KW-0547">Nucleotide-binding</keyword>
<keyword id="KW-0597">Phosphoprotein</keyword>
<keyword id="KW-1185">Reference proteome</keyword>
<keyword id="KW-0723">Serine/threonine-protein kinase</keyword>
<keyword id="KW-0808">Transferase</keyword>
<protein>
    <recommendedName>
        <fullName>Maternal embryonic leucine zipper kinase</fullName>
        <ecNumber>2.7.11.1</ecNumber>
    </recommendedName>
</protein>
<accession>Q28GW8</accession>
<accession>A4IGU0</accession>
<accession>F7BW48</accession>
<accession>F7BW55</accession>
<dbReference type="EC" id="2.7.11.1"/>
<dbReference type="EMBL" id="CR761185">
    <property type="protein sequence ID" value="CAJ81864.1"/>
    <property type="molecule type" value="mRNA"/>
</dbReference>
<dbReference type="EMBL" id="AAMC01051129">
    <property type="status" value="NOT_ANNOTATED_CDS"/>
    <property type="molecule type" value="Genomic_DNA"/>
</dbReference>
<dbReference type="EMBL" id="AAMC01051130">
    <property type="status" value="NOT_ANNOTATED_CDS"/>
    <property type="molecule type" value="Genomic_DNA"/>
</dbReference>
<dbReference type="EMBL" id="AAMC01051131">
    <property type="status" value="NOT_ANNOTATED_CDS"/>
    <property type="molecule type" value="Genomic_DNA"/>
</dbReference>
<dbReference type="EMBL" id="BC135245">
    <property type="protein sequence ID" value="AAI35246.1"/>
    <property type="status" value="ALT_SEQ"/>
    <property type="molecule type" value="mRNA"/>
</dbReference>
<dbReference type="RefSeq" id="NP_001016390.1">
    <property type="nucleotide sequence ID" value="NM_001016390.2"/>
</dbReference>
<dbReference type="RefSeq" id="XP_017948689.1">
    <property type="nucleotide sequence ID" value="XM_018093200.1"/>
</dbReference>
<dbReference type="RefSeq" id="XP_031755750.1">
    <property type="nucleotide sequence ID" value="XM_031899890.1"/>
</dbReference>
<dbReference type="RefSeq" id="XP_031755753.1">
    <property type="nucleotide sequence ID" value="XM_031899893.1"/>
</dbReference>
<dbReference type="SMR" id="Q28GW8"/>
<dbReference type="FunCoup" id="Q28GW8">
    <property type="interactions" value="1483"/>
</dbReference>
<dbReference type="STRING" id="8364.ENSXETP00000016541"/>
<dbReference type="PaxDb" id="8364-ENSXETP00000014336"/>
<dbReference type="DNASU" id="549144"/>
<dbReference type="GeneID" id="549144"/>
<dbReference type="KEGG" id="xtr:549144"/>
<dbReference type="AGR" id="Xenbase:XB-GENE-987654"/>
<dbReference type="CTD" id="9833"/>
<dbReference type="Xenbase" id="XB-GENE-987654">
    <property type="gene designation" value="melk"/>
</dbReference>
<dbReference type="eggNOG" id="KOG0583">
    <property type="taxonomic scope" value="Eukaryota"/>
</dbReference>
<dbReference type="InParanoid" id="Q28GW8"/>
<dbReference type="OMA" id="NVCTPKS"/>
<dbReference type="OrthoDB" id="193931at2759"/>
<dbReference type="Proteomes" id="UP000008143">
    <property type="component" value="Chromosome 1"/>
</dbReference>
<dbReference type="Bgee" id="ENSXETG00000006551">
    <property type="expression patterns" value="Expressed in ovary and 10 other cell types or tissues"/>
</dbReference>
<dbReference type="GO" id="GO:0005938">
    <property type="term" value="C:cell cortex"/>
    <property type="evidence" value="ECO:0000250"/>
    <property type="project" value="UniProtKB"/>
</dbReference>
<dbReference type="GO" id="GO:0005886">
    <property type="term" value="C:plasma membrane"/>
    <property type="evidence" value="ECO:0007669"/>
    <property type="project" value="UniProtKB-SubCell"/>
</dbReference>
<dbReference type="GO" id="GO:0005524">
    <property type="term" value="F:ATP binding"/>
    <property type="evidence" value="ECO:0007669"/>
    <property type="project" value="UniProtKB-KW"/>
</dbReference>
<dbReference type="GO" id="GO:0005509">
    <property type="term" value="F:calcium ion binding"/>
    <property type="evidence" value="ECO:0000250"/>
    <property type="project" value="UniProtKB"/>
</dbReference>
<dbReference type="GO" id="GO:0008289">
    <property type="term" value="F:lipid binding"/>
    <property type="evidence" value="ECO:0007669"/>
    <property type="project" value="UniProtKB-KW"/>
</dbReference>
<dbReference type="GO" id="GO:0004715">
    <property type="term" value="F:non-membrane spanning protein tyrosine kinase activity"/>
    <property type="evidence" value="ECO:0000250"/>
    <property type="project" value="UniProtKB"/>
</dbReference>
<dbReference type="GO" id="GO:0106310">
    <property type="term" value="F:protein serine kinase activity"/>
    <property type="evidence" value="ECO:0007669"/>
    <property type="project" value="RHEA"/>
</dbReference>
<dbReference type="GO" id="GO:0004674">
    <property type="term" value="F:protein serine/threonine kinase activity"/>
    <property type="evidence" value="ECO:0000250"/>
    <property type="project" value="UniProtKB"/>
</dbReference>
<dbReference type="GO" id="GO:0006915">
    <property type="term" value="P:apoptotic process"/>
    <property type="evidence" value="ECO:0000250"/>
    <property type="project" value="UniProtKB"/>
</dbReference>
<dbReference type="GO" id="GO:0008283">
    <property type="term" value="P:cell population proliferation"/>
    <property type="evidence" value="ECO:0000250"/>
    <property type="project" value="UniProtKB"/>
</dbReference>
<dbReference type="GO" id="GO:0048821">
    <property type="term" value="P:erythrocyte development"/>
    <property type="evidence" value="ECO:0007669"/>
    <property type="project" value="Ensembl"/>
</dbReference>
<dbReference type="GO" id="GO:0030097">
    <property type="term" value="P:hemopoiesis"/>
    <property type="evidence" value="ECO:0000250"/>
    <property type="project" value="UniProtKB"/>
</dbReference>
<dbReference type="GO" id="GO:0061351">
    <property type="term" value="P:neural precursor cell proliferation"/>
    <property type="evidence" value="ECO:0000250"/>
    <property type="project" value="UniProtKB"/>
</dbReference>
<dbReference type="GO" id="GO:0043065">
    <property type="term" value="P:positive regulation of apoptotic process"/>
    <property type="evidence" value="ECO:0000250"/>
    <property type="project" value="UniProtKB"/>
</dbReference>
<dbReference type="GO" id="GO:0046777">
    <property type="term" value="P:protein autophosphorylation"/>
    <property type="evidence" value="ECO:0000250"/>
    <property type="project" value="UniProtKB"/>
</dbReference>
<dbReference type="GO" id="GO:0008016">
    <property type="term" value="P:regulation of heart contraction"/>
    <property type="evidence" value="ECO:0007669"/>
    <property type="project" value="Ensembl"/>
</dbReference>
<dbReference type="CDD" id="cd12198">
    <property type="entry name" value="MELK_C"/>
    <property type="match status" value="1"/>
</dbReference>
<dbReference type="CDD" id="cd14078">
    <property type="entry name" value="STKc_MELK"/>
    <property type="match status" value="1"/>
</dbReference>
<dbReference type="CDD" id="cd14341">
    <property type="entry name" value="UBA_MELK"/>
    <property type="match status" value="1"/>
</dbReference>
<dbReference type="FunFam" id="1.10.510.10:FF:000901">
    <property type="entry name" value="Maternal embryonic leucine zipper kinase"/>
    <property type="match status" value="1"/>
</dbReference>
<dbReference type="FunFam" id="3.30.200.20:FF:000003">
    <property type="entry name" value="Non-specific serine/threonine protein kinase"/>
    <property type="match status" value="1"/>
</dbReference>
<dbReference type="FunFam" id="3.30.310.80:FF:000004">
    <property type="entry name" value="Non-specific serine/threonine protein kinase"/>
    <property type="match status" value="1"/>
</dbReference>
<dbReference type="Gene3D" id="3.30.310.80">
    <property type="entry name" value="Kinase associated domain 1, KA1"/>
    <property type="match status" value="1"/>
</dbReference>
<dbReference type="Gene3D" id="1.10.510.10">
    <property type="entry name" value="Transferase(Phosphotransferase) domain 1"/>
    <property type="match status" value="1"/>
</dbReference>
<dbReference type="InterPro" id="IPR028375">
    <property type="entry name" value="KA1/Ssp2_C"/>
</dbReference>
<dbReference type="InterPro" id="IPR001772">
    <property type="entry name" value="KA1_dom"/>
</dbReference>
<dbReference type="InterPro" id="IPR011009">
    <property type="entry name" value="Kinase-like_dom_sf"/>
</dbReference>
<dbReference type="InterPro" id="IPR034673">
    <property type="entry name" value="MELK"/>
</dbReference>
<dbReference type="InterPro" id="IPR048637">
    <property type="entry name" value="MELK_UBA"/>
</dbReference>
<dbReference type="InterPro" id="IPR000719">
    <property type="entry name" value="Prot_kinase_dom"/>
</dbReference>
<dbReference type="InterPro" id="IPR017441">
    <property type="entry name" value="Protein_kinase_ATP_BS"/>
</dbReference>
<dbReference type="InterPro" id="IPR008271">
    <property type="entry name" value="Ser/Thr_kinase_AS"/>
</dbReference>
<dbReference type="PANTHER" id="PTHR24346">
    <property type="entry name" value="MAP/MICROTUBULE AFFINITY-REGULATING KINASE"/>
    <property type="match status" value="1"/>
</dbReference>
<dbReference type="PANTHER" id="PTHR24346:SF30">
    <property type="entry name" value="MATERNAL EMBRYONIC LEUCINE ZIPPER KINASE"/>
    <property type="match status" value="1"/>
</dbReference>
<dbReference type="Pfam" id="PF02149">
    <property type="entry name" value="KA1"/>
    <property type="match status" value="1"/>
</dbReference>
<dbReference type="Pfam" id="PF00069">
    <property type="entry name" value="Pkinase"/>
    <property type="match status" value="1"/>
</dbReference>
<dbReference type="Pfam" id="PF21594">
    <property type="entry name" value="UBA_MELK"/>
    <property type="match status" value="1"/>
</dbReference>
<dbReference type="SMART" id="SM00220">
    <property type="entry name" value="S_TKc"/>
    <property type="match status" value="1"/>
</dbReference>
<dbReference type="SUPFAM" id="SSF103243">
    <property type="entry name" value="KA1-like"/>
    <property type="match status" value="1"/>
</dbReference>
<dbReference type="SUPFAM" id="SSF56112">
    <property type="entry name" value="Protein kinase-like (PK-like)"/>
    <property type="match status" value="1"/>
</dbReference>
<dbReference type="PROSITE" id="PS50032">
    <property type="entry name" value="KA1"/>
    <property type="match status" value="1"/>
</dbReference>
<dbReference type="PROSITE" id="PS00107">
    <property type="entry name" value="PROTEIN_KINASE_ATP"/>
    <property type="match status" value="1"/>
</dbReference>
<dbReference type="PROSITE" id="PS50011">
    <property type="entry name" value="PROTEIN_KINASE_DOM"/>
    <property type="match status" value="1"/>
</dbReference>
<dbReference type="PROSITE" id="PS00108">
    <property type="entry name" value="PROTEIN_KINASE_ST"/>
    <property type="match status" value="1"/>
</dbReference>
<organism>
    <name type="scientific">Xenopus tropicalis</name>
    <name type="common">Western clawed frog</name>
    <name type="synonym">Silurana tropicalis</name>
    <dbReference type="NCBI Taxonomy" id="8364"/>
    <lineage>
        <taxon>Eukaryota</taxon>
        <taxon>Metazoa</taxon>
        <taxon>Chordata</taxon>
        <taxon>Craniata</taxon>
        <taxon>Vertebrata</taxon>
        <taxon>Euteleostomi</taxon>
        <taxon>Amphibia</taxon>
        <taxon>Batrachia</taxon>
        <taxon>Anura</taxon>
        <taxon>Pipoidea</taxon>
        <taxon>Pipidae</taxon>
        <taxon>Xenopodinae</taxon>
        <taxon>Xenopus</taxon>
        <taxon>Silurana</taxon>
    </lineage>
</organism>